<proteinExistence type="inferred from homology"/>
<feature type="chain" id="PRO_0000259155" description="Isocitrate dehydrogenase kinase/phosphatase">
    <location>
        <begin position="1"/>
        <end position="608"/>
    </location>
</feature>
<feature type="active site" evidence="1">
    <location>
        <position position="384"/>
    </location>
</feature>
<feature type="binding site" evidence="1">
    <location>
        <begin position="328"/>
        <end position="334"/>
    </location>
    <ligand>
        <name>ATP</name>
        <dbReference type="ChEBI" id="CHEBI:30616"/>
    </ligand>
</feature>
<feature type="binding site" evidence="1">
    <location>
        <position position="349"/>
    </location>
    <ligand>
        <name>ATP</name>
        <dbReference type="ChEBI" id="CHEBI:30616"/>
    </ligand>
</feature>
<accession>Q477B5</accession>
<name>ACEK_CUPPJ</name>
<comment type="function">
    <text evidence="1">Bifunctional enzyme which can phosphorylate or dephosphorylate isocitrate dehydrogenase (IDH) on a specific serine residue. This is a regulatory mechanism which enables bacteria to bypass the Krebs cycle via the glyoxylate shunt in response to the source of carbon. When bacteria are grown on glucose, IDH is fully active and unphosphorylated, but when grown on acetate or ethanol, the activity of IDH declines drastically concomitant with its phosphorylation.</text>
</comment>
<comment type="catalytic activity">
    <reaction evidence="1">
        <text>L-seryl-[isocitrate dehydrogenase] + ATP = O-phospho-L-seryl-[isocitrate dehydrogenase] + ADP + H(+)</text>
        <dbReference type="Rhea" id="RHEA:43540"/>
        <dbReference type="Rhea" id="RHEA-COMP:10605"/>
        <dbReference type="Rhea" id="RHEA-COMP:10606"/>
        <dbReference type="ChEBI" id="CHEBI:15378"/>
        <dbReference type="ChEBI" id="CHEBI:29999"/>
        <dbReference type="ChEBI" id="CHEBI:30616"/>
        <dbReference type="ChEBI" id="CHEBI:83421"/>
        <dbReference type="ChEBI" id="CHEBI:456216"/>
        <dbReference type="EC" id="2.7.11.5"/>
    </reaction>
</comment>
<comment type="subcellular location">
    <subcellularLocation>
        <location evidence="1">Cytoplasm</location>
    </subcellularLocation>
</comment>
<comment type="similarity">
    <text evidence="1">Belongs to the AceK family.</text>
</comment>
<keyword id="KW-0067">ATP-binding</keyword>
<keyword id="KW-0963">Cytoplasm</keyword>
<keyword id="KW-0329">Glyoxylate bypass</keyword>
<keyword id="KW-0378">Hydrolase</keyword>
<keyword id="KW-0418">Kinase</keyword>
<keyword id="KW-0547">Nucleotide-binding</keyword>
<keyword id="KW-0904">Protein phosphatase</keyword>
<keyword id="KW-0723">Serine/threonine-protein kinase</keyword>
<keyword id="KW-0808">Transferase</keyword>
<keyword id="KW-0816">Tricarboxylic acid cycle</keyword>
<dbReference type="EC" id="2.7.11.5" evidence="1"/>
<dbReference type="EC" id="3.1.3.-" evidence="1"/>
<dbReference type="EMBL" id="CP000090">
    <property type="protein sequence ID" value="AAZ59518.1"/>
    <property type="molecule type" value="Genomic_DNA"/>
</dbReference>
<dbReference type="SMR" id="Q477B5"/>
<dbReference type="STRING" id="264198.Reut_A0136"/>
<dbReference type="KEGG" id="reu:Reut_A0136"/>
<dbReference type="eggNOG" id="COG4579">
    <property type="taxonomic scope" value="Bacteria"/>
</dbReference>
<dbReference type="HOGENOM" id="CLU_033804_1_1_4"/>
<dbReference type="OrthoDB" id="5287793at2"/>
<dbReference type="GO" id="GO:0005737">
    <property type="term" value="C:cytoplasm"/>
    <property type="evidence" value="ECO:0007669"/>
    <property type="project" value="UniProtKB-SubCell"/>
</dbReference>
<dbReference type="GO" id="GO:0008772">
    <property type="term" value="F:[isocitrate dehydrogenase (NADP+)] kinase activity"/>
    <property type="evidence" value="ECO:0007669"/>
    <property type="project" value="UniProtKB-UniRule"/>
</dbReference>
<dbReference type="GO" id="GO:0016208">
    <property type="term" value="F:AMP binding"/>
    <property type="evidence" value="ECO:0007669"/>
    <property type="project" value="TreeGrafter"/>
</dbReference>
<dbReference type="GO" id="GO:0005524">
    <property type="term" value="F:ATP binding"/>
    <property type="evidence" value="ECO:0007669"/>
    <property type="project" value="UniProtKB-UniRule"/>
</dbReference>
<dbReference type="GO" id="GO:0004721">
    <property type="term" value="F:phosphoprotein phosphatase activity"/>
    <property type="evidence" value="ECO:0007669"/>
    <property type="project" value="UniProtKB-KW"/>
</dbReference>
<dbReference type="GO" id="GO:0004674">
    <property type="term" value="F:protein serine/threonine kinase activity"/>
    <property type="evidence" value="ECO:0007669"/>
    <property type="project" value="UniProtKB-KW"/>
</dbReference>
<dbReference type="GO" id="GO:0006006">
    <property type="term" value="P:glucose metabolic process"/>
    <property type="evidence" value="ECO:0007669"/>
    <property type="project" value="InterPro"/>
</dbReference>
<dbReference type="GO" id="GO:0006097">
    <property type="term" value="P:glyoxylate cycle"/>
    <property type="evidence" value="ECO:0007669"/>
    <property type="project" value="UniProtKB-UniRule"/>
</dbReference>
<dbReference type="GO" id="GO:0006099">
    <property type="term" value="P:tricarboxylic acid cycle"/>
    <property type="evidence" value="ECO:0007669"/>
    <property type="project" value="UniProtKB-UniRule"/>
</dbReference>
<dbReference type="HAMAP" id="MF_00747">
    <property type="entry name" value="AceK"/>
    <property type="match status" value="1"/>
</dbReference>
<dbReference type="InterPro" id="IPR046855">
    <property type="entry name" value="AceK_kinase"/>
</dbReference>
<dbReference type="InterPro" id="IPR046854">
    <property type="entry name" value="AceK_regulatory"/>
</dbReference>
<dbReference type="InterPro" id="IPR010452">
    <property type="entry name" value="Isocitrate_DH_AceK"/>
</dbReference>
<dbReference type="NCBIfam" id="NF002804">
    <property type="entry name" value="PRK02946.1"/>
    <property type="match status" value="1"/>
</dbReference>
<dbReference type="PANTHER" id="PTHR39559">
    <property type="match status" value="1"/>
</dbReference>
<dbReference type="PANTHER" id="PTHR39559:SF1">
    <property type="entry name" value="ISOCITRATE DEHYDROGENASE KINASE_PHOSPHATASE"/>
    <property type="match status" value="1"/>
</dbReference>
<dbReference type="Pfam" id="PF06315">
    <property type="entry name" value="AceK_kinase"/>
    <property type="match status" value="1"/>
</dbReference>
<dbReference type="Pfam" id="PF20423">
    <property type="entry name" value="AceK_regulatory"/>
    <property type="match status" value="1"/>
</dbReference>
<dbReference type="PIRSF" id="PIRSF000719">
    <property type="entry name" value="AceK"/>
    <property type="match status" value="1"/>
</dbReference>
<protein>
    <recommendedName>
        <fullName evidence="1">Isocitrate dehydrogenase kinase/phosphatase</fullName>
        <shortName evidence="1">IDH kinase/phosphatase</shortName>
        <shortName evidence="1">IDHK/P</shortName>
        <ecNumber evidence="1">2.7.11.5</ecNumber>
        <ecNumber evidence="1">3.1.3.-</ecNumber>
    </recommendedName>
</protein>
<organism>
    <name type="scientific">Cupriavidus pinatubonensis (strain JMP 134 / LMG 1197)</name>
    <name type="common">Cupriavidus necator (strain JMP 134)</name>
    <dbReference type="NCBI Taxonomy" id="264198"/>
    <lineage>
        <taxon>Bacteria</taxon>
        <taxon>Pseudomonadati</taxon>
        <taxon>Pseudomonadota</taxon>
        <taxon>Betaproteobacteria</taxon>
        <taxon>Burkholderiales</taxon>
        <taxon>Burkholderiaceae</taxon>
        <taxon>Cupriavidus</taxon>
    </lineage>
</organism>
<reference key="1">
    <citation type="journal article" date="2010" name="PLoS ONE">
        <title>The complete multipartite genome sequence of Cupriavidus necator JMP134, a versatile pollutant degrader.</title>
        <authorList>
            <person name="Lykidis A."/>
            <person name="Perez-Pantoja D."/>
            <person name="Ledger T."/>
            <person name="Mavromatis K."/>
            <person name="Anderson I.J."/>
            <person name="Ivanova N.N."/>
            <person name="Hooper S.D."/>
            <person name="Lapidus A."/>
            <person name="Lucas S."/>
            <person name="Gonzalez B."/>
            <person name="Kyrpides N.C."/>
        </authorList>
    </citation>
    <scope>NUCLEOTIDE SEQUENCE [LARGE SCALE GENOMIC DNA]</scope>
    <source>
        <strain>JMP134 / LMG 1197</strain>
    </source>
</reference>
<sequence length="608" mass="71455">MSHFPKLLSSQIAFDVARTMLDGFDKHYRLFREVSRQAKVKFEAGDWHSLQQMQRDRIAFYNERVRETSVILEDEYDAENIEDEIWQQIKLHYIGLLTNHHQPELAETFFNSVCTRLLHRSYFNNDFIFVRPAISTEYIENEESPTRPTFRAYYPGSRQGMAECFERIVHNFQLETPFEDLRRDVGHVVRGVEEHFGDFRIAPNFQIHVLSSLFFRNKTAFIIGRIVNADRTYPLAIPIVHGPSGKLTLDAVLLKKVQVLILFSFTHSYFMVDMEIPSAYVTFLRDIMPRKPRAEIYTSLGLQKQGKNLFYRDFLHHLQHSSDKFISAPGIKGLVMLVFTLPSYPYVFKVIKDFYPAPKETTRELIKSKYQLVKQHDRVGRMADTLEYSNVAFPLSRFDEDLVRELEHHAPSMIEYQRGKDGGEEIVVRHVYIERRMTPLNIWLQEGTDEQLEHGIIEYGNAIKELIAANIFPGDMLYKNFGVTRHGRVVFYDYDEIEYFTDCNVRRVPQPRNEEEEMSGDIWYTVRPHDIFPETFRTFLLGNPRVREAFLRHHEDLFDPAMWQSHKDRLLAGHVHDFFAYPISERFINRYGTAAHGTPVASFARRVA</sequence>
<evidence type="ECO:0000255" key="1">
    <source>
        <dbReference type="HAMAP-Rule" id="MF_00747"/>
    </source>
</evidence>
<gene>
    <name evidence="1" type="primary">aceK</name>
    <name type="ordered locus">Reut_A0136</name>
</gene>